<keyword id="KW-0285">Flavoprotein</keyword>
<keyword id="KW-0288">FMN</keyword>
<keyword id="KW-0560">Oxidoreductase</keyword>
<keyword id="KW-0664">Pyridoxine biosynthesis</keyword>
<keyword id="KW-1185">Reference proteome</keyword>
<name>PDXH_SHEB5</name>
<comment type="function">
    <text evidence="1">Catalyzes the oxidation of either pyridoxine 5'-phosphate (PNP) or pyridoxamine 5'-phosphate (PMP) into pyridoxal 5'-phosphate (PLP).</text>
</comment>
<comment type="catalytic activity">
    <reaction evidence="1">
        <text>pyridoxamine 5'-phosphate + O2 + H2O = pyridoxal 5'-phosphate + H2O2 + NH4(+)</text>
        <dbReference type="Rhea" id="RHEA:15817"/>
        <dbReference type="ChEBI" id="CHEBI:15377"/>
        <dbReference type="ChEBI" id="CHEBI:15379"/>
        <dbReference type="ChEBI" id="CHEBI:16240"/>
        <dbReference type="ChEBI" id="CHEBI:28938"/>
        <dbReference type="ChEBI" id="CHEBI:58451"/>
        <dbReference type="ChEBI" id="CHEBI:597326"/>
        <dbReference type="EC" id="1.4.3.5"/>
    </reaction>
</comment>
<comment type="catalytic activity">
    <reaction evidence="1">
        <text>pyridoxine 5'-phosphate + O2 = pyridoxal 5'-phosphate + H2O2</text>
        <dbReference type="Rhea" id="RHEA:15149"/>
        <dbReference type="ChEBI" id="CHEBI:15379"/>
        <dbReference type="ChEBI" id="CHEBI:16240"/>
        <dbReference type="ChEBI" id="CHEBI:58589"/>
        <dbReference type="ChEBI" id="CHEBI:597326"/>
        <dbReference type="EC" id="1.4.3.5"/>
    </reaction>
</comment>
<comment type="cofactor">
    <cofactor evidence="1">
        <name>FMN</name>
        <dbReference type="ChEBI" id="CHEBI:58210"/>
    </cofactor>
    <text evidence="1">Binds 1 FMN per subunit.</text>
</comment>
<comment type="pathway">
    <text evidence="1">Cofactor metabolism; pyridoxal 5'-phosphate salvage; pyridoxal 5'-phosphate from pyridoxamine 5'-phosphate: step 1/1.</text>
</comment>
<comment type="pathway">
    <text evidence="1">Cofactor metabolism; pyridoxal 5'-phosphate salvage; pyridoxal 5'-phosphate from pyridoxine 5'-phosphate: step 1/1.</text>
</comment>
<comment type="subunit">
    <text evidence="1">Homodimer.</text>
</comment>
<comment type="similarity">
    <text evidence="1">Belongs to the pyridoxamine 5'-phosphate oxidase family.</text>
</comment>
<accession>A3D3G4</accession>
<feature type="chain" id="PRO_0000335797" description="Pyridoxine/pyridoxamine 5'-phosphate oxidase">
    <location>
        <begin position="1"/>
        <end position="212"/>
    </location>
</feature>
<feature type="binding site" evidence="1">
    <location>
        <begin position="8"/>
        <end position="11"/>
    </location>
    <ligand>
        <name>substrate</name>
    </ligand>
</feature>
<feature type="binding site" evidence="1">
    <location>
        <begin position="61"/>
        <end position="66"/>
    </location>
    <ligand>
        <name>FMN</name>
        <dbReference type="ChEBI" id="CHEBI:58210"/>
    </ligand>
</feature>
<feature type="binding site" evidence="1">
    <location>
        <position position="66"/>
    </location>
    <ligand>
        <name>substrate</name>
    </ligand>
</feature>
<feature type="binding site" evidence="1">
    <location>
        <begin position="76"/>
        <end position="77"/>
    </location>
    <ligand>
        <name>FMN</name>
        <dbReference type="ChEBI" id="CHEBI:58210"/>
    </ligand>
</feature>
<feature type="binding site" evidence="1">
    <location>
        <position position="82"/>
    </location>
    <ligand>
        <name>FMN</name>
        <dbReference type="ChEBI" id="CHEBI:58210"/>
    </ligand>
</feature>
<feature type="binding site" evidence="1">
    <location>
        <position position="83"/>
    </location>
    <ligand>
        <name>FMN</name>
        <dbReference type="ChEBI" id="CHEBI:58210"/>
    </ligand>
</feature>
<feature type="binding site" evidence="1">
    <location>
        <position position="105"/>
    </location>
    <ligand>
        <name>FMN</name>
        <dbReference type="ChEBI" id="CHEBI:58210"/>
    </ligand>
</feature>
<feature type="binding site" evidence="1">
    <location>
        <position position="123"/>
    </location>
    <ligand>
        <name>substrate</name>
    </ligand>
</feature>
<feature type="binding site" evidence="1">
    <location>
        <position position="127"/>
    </location>
    <ligand>
        <name>substrate</name>
    </ligand>
</feature>
<feature type="binding site" evidence="1">
    <location>
        <position position="131"/>
    </location>
    <ligand>
        <name>substrate</name>
    </ligand>
</feature>
<feature type="binding site" evidence="1">
    <location>
        <begin position="140"/>
        <end position="141"/>
    </location>
    <ligand>
        <name>FMN</name>
        <dbReference type="ChEBI" id="CHEBI:58210"/>
    </ligand>
</feature>
<feature type="binding site" evidence="1">
    <location>
        <position position="185"/>
    </location>
    <ligand>
        <name>FMN</name>
        <dbReference type="ChEBI" id="CHEBI:58210"/>
    </ligand>
</feature>
<feature type="binding site" evidence="1">
    <location>
        <begin position="191"/>
        <end position="193"/>
    </location>
    <ligand>
        <name>substrate</name>
    </ligand>
</feature>
<feature type="binding site" evidence="1">
    <location>
        <position position="195"/>
    </location>
    <ligand>
        <name>FMN</name>
        <dbReference type="ChEBI" id="CHEBI:58210"/>
    </ligand>
</feature>
<organism>
    <name type="scientific">Shewanella baltica (strain OS155 / ATCC BAA-1091)</name>
    <dbReference type="NCBI Taxonomy" id="325240"/>
    <lineage>
        <taxon>Bacteria</taxon>
        <taxon>Pseudomonadati</taxon>
        <taxon>Pseudomonadota</taxon>
        <taxon>Gammaproteobacteria</taxon>
        <taxon>Alteromonadales</taxon>
        <taxon>Shewanellaceae</taxon>
        <taxon>Shewanella</taxon>
    </lineage>
</organism>
<sequence length="212" mass="24360">MTDLSDIRREYAKGGLRRADLPQNPMDLFELWMTQARDAELSDPTAMCVATVDEHGQPFQRIVLLKRFDDTGFVFFTNLGSRKAQQIAANNKVSLHFPWHPLERQVSVLGEAQALSTAEVLKYFMTRPKDSQIAAWVSQQSSKLSARQVLEGKFFEMKAKFAKGDVPLPSFWGGYLVRPSSIEFWQGGEHRLHDRFIYTRHDAEWEIDRLAP</sequence>
<dbReference type="EC" id="1.4.3.5" evidence="1"/>
<dbReference type="EMBL" id="CP000563">
    <property type="protein sequence ID" value="ABN61277.1"/>
    <property type="molecule type" value="Genomic_DNA"/>
</dbReference>
<dbReference type="RefSeq" id="WP_006081276.1">
    <property type="nucleotide sequence ID" value="NC_009052.1"/>
</dbReference>
<dbReference type="SMR" id="A3D3G4"/>
<dbReference type="STRING" id="325240.Sbal_1770"/>
<dbReference type="GeneID" id="11772029"/>
<dbReference type="KEGG" id="sbl:Sbal_1770"/>
<dbReference type="HOGENOM" id="CLU_032263_2_2_6"/>
<dbReference type="OrthoDB" id="9780392at2"/>
<dbReference type="UniPathway" id="UPA01068">
    <property type="reaction ID" value="UER00304"/>
</dbReference>
<dbReference type="UniPathway" id="UPA01068">
    <property type="reaction ID" value="UER00305"/>
</dbReference>
<dbReference type="Proteomes" id="UP000001557">
    <property type="component" value="Chromosome"/>
</dbReference>
<dbReference type="GO" id="GO:0010181">
    <property type="term" value="F:FMN binding"/>
    <property type="evidence" value="ECO:0007669"/>
    <property type="project" value="UniProtKB-UniRule"/>
</dbReference>
<dbReference type="GO" id="GO:0004733">
    <property type="term" value="F:pyridoxamine phosphate oxidase activity"/>
    <property type="evidence" value="ECO:0007669"/>
    <property type="project" value="UniProtKB-UniRule"/>
</dbReference>
<dbReference type="GO" id="GO:0008615">
    <property type="term" value="P:pyridoxine biosynthetic process"/>
    <property type="evidence" value="ECO:0007669"/>
    <property type="project" value="UniProtKB-KW"/>
</dbReference>
<dbReference type="FunFam" id="2.30.110.10:FF:000001">
    <property type="entry name" value="Pyridoxine/pyridoxamine 5'-phosphate oxidase"/>
    <property type="match status" value="1"/>
</dbReference>
<dbReference type="Gene3D" id="2.30.110.10">
    <property type="entry name" value="Electron Transport, Fmn-binding Protein, Chain A"/>
    <property type="match status" value="1"/>
</dbReference>
<dbReference type="HAMAP" id="MF_01629">
    <property type="entry name" value="PdxH"/>
    <property type="match status" value="1"/>
</dbReference>
<dbReference type="InterPro" id="IPR000659">
    <property type="entry name" value="Pyridox_Oxase"/>
</dbReference>
<dbReference type="InterPro" id="IPR019740">
    <property type="entry name" value="Pyridox_Oxase_CS"/>
</dbReference>
<dbReference type="InterPro" id="IPR011576">
    <property type="entry name" value="Pyridox_Oxase_N"/>
</dbReference>
<dbReference type="InterPro" id="IPR019576">
    <property type="entry name" value="Pyridoxamine_oxidase_dimer_C"/>
</dbReference>
<dbReference type="InterPro" id="IPR012349">
    <property type="entry name" value="Split_barrel_FMN-bd"/>
</dbReference>
<dbReference type="NCBIfam" id="TIGR00558">
    <property type="entry name" value="pdxH"/>
    <property type="match status" value="1"/>
</dbReference>
<dbReference type="NCBIfam" id="NF004231">
    <property type="entry name" value="PRK05679.1"/>
    <property type="match status" value="1"/>
</dbReference>
<dbReference type="PANTHER" id="PTHR10851:SF0">
    <property type="entry name" value="PYRIDOXINE-5'-PHOSPHATE OXIDASE"/>
    <property type="match status" value="1"/>
</dbReference>
<dbReference type="PANTHER" id="PTHR10851">
    <property type="entry name" value="PYRIDOXINE-5-PHOSPHATE OXIDASE"/>
    <property type="match status" value="1"/>
</dbReference>
<dbReference type="Pfam" id="PF10590">
    <property type="entry name" value="PNP_phzG_C"/>
    <property type="match status" value="1"/>
</dbReference>
<dbReference type="Pfam" id="PF01243">
    <property type="entry name" value="PNPOx_N"/>
    <property type="match status" value="1"/>
</dbReference>
<dbReference type="PIRSF" id="PIRSF000190">
    <property type="entry name" value="Pyd_amn-ph_oxd"/>
    <property type="match status" value="1"/>
</dbReference>
<dbReference type="SUPFAM" id="SSF50475">
    <property type="entry name" value="FMN-binding split barrel"/>
    <property type="match status" value="1"/>
</dbReference>
<dbReference type="PROSITE" id="PS01064">
    <property type="entry name" value="PYRIDOX_OXIDASE"/>
    <property type="match status" value="1"/>
</dbReference>
<proteinExistence type="inferred from homology"/>
<gene>
    <name evidence="1" type="primary">pdxH</name>
    <name type="ordered locus">Sbal_1770</name>
</gene>
<reference key="1">
    <citation type="submission" date="2007-02" db="EMBL/GenBank/DDBJ databases">
        <title>Complete sequence of chromosome of Shewanella baltica OS155.</title>
        <authorList>
            <consortium name="US DOE Joint Genome Institute"/>
            <person name="Copeland A."/>
            <person name="Lucas S."/>
            <person name="Lapidus A."/>
            <person name="Barry K."/>
            <person name="Detter J.C."/>
            <person name="Glavina del Rio T."/>
            <person name="Hammon N."/>
            <person name="Israni S."/>
            <person name="Dalin E."/>
            <person name="Tice H."/>
            <person name="Pitluck S."/>
            <person name="Sims D.R."/>
            <person name="Brettin T."/>
            <person name="Bruce D."/>
            <person name="Han C."/>
            <person name="Tapia R."/>
            <person name="Brainard J."/>
            <person name="Schmutz J."/>
            <person name="Larimer F."/>
            <person name="Land M."/>
            <person name="Hauser L."/>
            <person name="Kyrpides N."/>
            <person name="Mikhailova N."/>
            <person name="Brettar I."/>
            <person name="Klappenbach J."/>
            <person name="Konstantinidis K."/>
            <person name="Rodrigues J."/>
            <person name="Tiedje J."/>
            <person name="Richardson P."/>
        </authorList>
    </citation>
    <scope>NUCLEOTIDE SEQUENCE [LARGE SCALE GENOMIC DNA]</scope>
    <source>
        <strain>OS155 / ATCC BAA-1091</strain>
    </source>
</reference>
<protein>
    <recommendedName>
        <fullName evidence="1">Pyridoxine/pyridoxamine 5'-phosphate oxidase</fullName>
        <ecNumber evidence="1">1.4.3.5</ecNumber>
    </recommendedName>
    <alternativeName>
        <fullName evidence="1">PNP/PMP oxidase</fullName>
        <shortName evidence="1">PNPOx</shortName>
    </alternativeName>
    <alternativeName>
        <fullName evidence="1">Pyridoxal 5'-phosphate synthase</fullName>
    </alternativeName>
</protein>
<evidence type="ECO:0000255" key="1">
    <source>
        <dbReference type="HAMAP-Rule" id="MF_01629"/>
    </source>
</evidence>